<proteinExistence type="inferred from homology"/>
<feature type="chain" id="PRO_0000303130" description="Probable DNA-directed RNA polymerase subunit delta">
    <location>
        <begin position="1"/>
        <end position="188"/>
    </location>
</feature>
<feature type="domain" description="HTH HARE-type" evidence="2">
    <location>
        <begin position="14"/>
        <end position="81"/>
    </location>
</feature>
<feature type="region of interest" description="Disordered" evidence="3">
    <location>
        <begin position="96"/>
        <end position="188"/>
    </location>
</feature>
<feature type="compositionally biased region" description="Acidic residues" evidence="3">
    <location>
        <begin position="118"/>
        <end position="150"/>
    </location>
</feature>
<feature type="compositionally biased region" description="Acidic residues" evidence="3">
    <location>
        <begin position="158"/>
        <end position="188"/>
    </location>
</feature>
<evidence type="ECO:0000255" key="1">
    <source>
        <dbReference type="HAMAP-Rule" id="MF_00357"/>
    </source>
</evidence>
<evidence type="ECO:0000255" key="2">
    <source>
        <dbReference type="PROSITE-ProRule" id="PRU01261"/>
    </source>
</evidence>
<evidence type="ECO:0000256" key="3">
    <source>
        <dbReference type="SAM" id="MobiDB-lite"/>
    </source>
</evidence>
<accession>A2RIW1</accession>
<name>RPOE_LACLM</name>
<reference key="1">
    <citation type="journal article" date="2007" name="J. Bacteriol.">
        <title>The complete genome sequence of the lactic acid bacterial paradigm Lactococcus lactis subsp. cremoris MG1363.</title>
        <authorList>
            <person name="Wegmann U."/>
            <person name="O'Connell-Motherway M."/>
            <person name="Zomer A."/>
            <person name="Buist G."/>
            <person name="Shearman C."/>
            <person name="Canchaya C."/>
            <person name="Ventura M."/>
            <person name="Goesmann A."/>
            <person name="Gasson M.J."/>
            <person name="Kuipers O.P."/>
            <person name="van Sinderen D."/>
            <person name="Kok J."/>
        </authorList>
    </citation>
    <scope>NUCLEOTIDE SEQUENCE [LARGE SCALE GENOMIC DNA]</scope>
    <source>
        <strain>MG1363</strain>
    </source>
</reference>
<organism>
    <name type="scientific">Lactococcus lactis subsp. cremoris (strain MG1363)</name>
    <dbReference type="NCBI Taxonomy" id="416870"/>
    <lineage>
        <taxon>Bacteria</taxon>
        <taxon>Bacillati</taxon>
        <taxon>Bacillota</taxon>
        <taxon>Bacilli</taxon>
        <taxon>Lactobacillales</taxon>
        <taxon>Streptococcaceae</taxon>
        <taxon>Lactococcus</taxon>
        <taxon>Lactococcus cremoris subsp. cremoris</taxon>
    </lineage>
</organism>
<comment type="function">
    <text evidence="1">Participates in both the initiation and recycling phases of transcription. In the presence of the delta subunit, RNAP displays an increased specificity of transcription, a decreased affinity for nucleic acids, and an increased efficiency of RNA synthesis because of enhanced recycling.</text>
</comment>
<comment type="subunit">
    <text evidence="1">RNAP is composed of a core of 2 alpha, a beta and a beta' subunits. The core is associated with a delta subunit and one of several sigma factors.</text>
</comment>
<comment type="similarity">
    <text evidence="1">Belongs to the RpoE family.</text>
</comment>
<protein>
    <recommendedName>
        <fullName evidence="1">Probable DNA-directed RNA polymerase subunit delta</fullName>
    </recommendedName>
    <alternativeName>
        <fullName evidence="1">RNAP delta factor</fullName>
    </alternativeName>
</protein>
<sequence>MKITALEGQKISELSMIEVAHALLEQNGKEMQFSEIIRAIQDYLEKSDDEIKASISRFYTEINTDGSFIPLGNNVWALRSWYAIDEIDEEVIALDEIEDEEEEEKPAKKRKKVNAFGIEDEIDPEDEEGTKETTEEDMSYDTQAEDEDKDDVAAYDAELAEVELDNVDEEVDIEVEDDEDDSDDTDED</sequence>
<dbReference type="EMBL" id="AM406671">
    <property type="protein sequence ID" value="CAL97208.1"/>
    <property type="molecule type" value="Genomic_DNA"/>
</dbReference>
<dbReference type="RefSeq" id="WP_011834624.1">
    <property type="nucleotide sequence ID" value="NC_009004.1"/>
</dbReference>
<dbReference type="SMR" id="A2RIW1"/>
<dbReference type="STRING" id="416870.llmg_0608"/>
<dbReference type="KEGG" id="llm:llmg_0608"/>
<dbReference type="eggNOG" id="COG3343">
    <property type="taxonomic scope" value="Bacteria"/>
</dbReference>
<dbReference type="HOGENOM" id="CLU_116648_0_0_9"/>
<dbReference type="OrthoDB" id="401223at2"/>
<dbReference type="PhylomeDB" id="A2RIW1"/>
<dbReference type="Proteomes" id="UP000000364">
    <property type="component" value="Chromosome"/>
</dbReference>
<dbReference type="GO" id="GO:0000428">
    <property type="term" value="C:DNA-directed RNA polymerase complex"/>
    <property type="evidence" value="ECO:0007669"/>
    <property type="project" value="UniProtKB-KW"/>
</dbReference>
<dbReference type="GO" id="GO:0003899">
    <property type="term" value="F:DNA-directed RNA polymerase activity"/>
    <property type="evidence" value="ECO:0007669"/>
    <property type="project" value="UniProtKB-UniRule"/>
</dbReference>
<dbReference type="GO" id="GO:0006351">
    <property type="term" value="P:DNA-templated transcription"/>
    <property type="evidence" value="ECO:0007669"/>
    <property type="project" value="InterPro"/>
</dbReference>
<dbReference type="GO" id="GO:0006355">
    <property type="term" value="P:regulation of DNA-templated transcription"/>
    <property type="evidence" value="ECO:0007669"/>
    <property type="project" value="UniProtKB-UniRule"/>
</dbReference>
<dbReference type="Gene3D" id="1.10.10.1250">
    <property type="entry name" value="RNA polymerase, subunit delta, N-terminal domain"/>
    <property type="match status" value="1"/>
</dbReference>
<dbReference type="HAMAP" id="MF_00357">
    <property type="entry name" value="RNApol_bact_RpoE"/>
    <property type="match status" value="1"/>
</dbReference>
<dbReference type="InterPro" id="IPR007759">
    <property type="entry name" value="Asxl_HARE-HTH"/>
</dbReference>
<dbReference type="InterPro" id="IPR038087">
    <property type="entry name" value="RNAP_delta_N_dom_sf"/>
</dbReference>
<dbReference type="InterPro" id="IPR029757">
    <property type="entry name" value="RpoE"/>
</dbReference>
<dbReference type="NCBIfam" id="TIGR04567">
    <property type="entry name" value="RNAP_delt_lowGC"/>
    <property type="match status" value="1"/>
</dbReference>
<dbReference type="Pfam" id="PF05066">
    <property type="entry name" value="HARE-HTH"/>
    <property type="match status" value="1"/>
</dbReference>
<dbReference type="PROSITE" id="PS51913">
    <property type="entry name" value="HTH_HARE"/>
    <property type="match status" value="1"/>
</dbReference>
<keyword id="KW-0240">DNA-directed RNA polymerase</keyword>
<keyword id="KW-0548">Nucleotidyltransferase</keyword>
<keyword id="KW-0804">Transcription</keyword>
<keyword id="KW-0808">Transferase</keyword>
<gene>
    <name evidence="1" type="primary">rpoE</name>
    <name type="ordered locus">llmg_0608</name>
</gene>